<evidence type="ECO:0000250" key="1"/>
<evidence type="ECO:0000269" key="2">
    <source>
    </source>
</evidence>
<evidence type="ECO:0000305" key="3"/>
<comment type="function">
    <text>Stimulates prolactin (PRL) release and regulates the expression of prolactin through its receptor GPR10. May stimulate lactotrophs directly to secrete PRL.</text>
</comment>
<comment type="subcellular location">
    <subcellularLocation>
        <location>Secreted</location>
    </subcellularLocation>
</comment>
<comment type="alternative products">
    <event type="alternative splicing"/>
    <isoform>
        <id>P81278-1</id>
        <name>1</name>
        <sequence type="displayed"/>
    </isoform>
    <isoform>
        <id>P81278-2</id>
        <name>2</name>
        <sequence type="described" ref="VSP_004370"/>
    </isoform>
</comment>
<comment type="tissue specificity">
    <text evidence="2">Widely expressed, with highest levels in medulla oblongata and hypothalamus.</text>
</comment>
<sequence length="83" mass="9215">MALKTWLLCLLLLSLVLPGASSRAHQHSMETRTPDINPAWYTGRGIRPVGRFGRRRATPRDVTGLGQLSCLPLDGRTKFSQRG</sequence>
<dbReference type="EMBL" id="AB015418">
    <property type="protein sequence ID" value="BAA29026.1"/>
    <property type="molecule type" value="mRNA"/>
</dbReference>
<dbReference type="EMBL" id="AB040613">
    <property type="protein sequence ID" value="BAB33377.1"/>
    <property type="molecule type" value="Genomic_DNA"/>
</dbReference>
<dbReference type="EMBL" id="AF521930">
    <property type="protein sequence ID" value="AAM82154.1"/>
    <property type="molecule type" value="mRNA"/>
</dbReference>
<dbReference type="PIR" id="JC7607">
    <property type="entry name" value="JC7607"/>
</dbReference>
<dbReference type="RefSeq" id="NP_071558.1">
    <molecule id="P81278-1"/>
    <property type="nucleotide sequence ID" value="NM_022222.2"/>
</dbReference>
<dbReference type="RefSeq" id="XP_006245540.1">
    <molecule id="P81278-1"/>
    <property type="nucleotide sequence ID" value="XM_006245478.5"/>
</dbReference>
<dbReference type="FunCoup" id="P81278">
    <property type="interactions" value="1"/>
</dbReference>
<dbReference type="STRING" id="10116.ENSRNOP00000026912"/>
<dbReference type="PhosphoSitePlus" id="P81278"/>
<dbReference type="PaxDb" id="10116-ENSRNOP00000026912"/>
<dbReference type="GeneID" id="63850"/>
<dbReference type="KEGG" id="rno:63850"/>
<dbReference type="UCSC" id="RGD:628634">
    <molecule id="P81278-1"/>
    <property type="organism name" value="rat"/>
</dbReference>
<dbReference type="AGR" id="RGD:628634"/>
<dbReference type="CTD" id="51052"/>
<dbReference type="RGD" id="628634">
    <property type="gene designation" value="Prlh"/>
</dbReference>
<dbReference type="VEuPathDB" id="HostDB:ENSRNOG00000019871"/>
<dbReference type="eggNOG" id="ENOG502S7XA">
    <property type="taxonomic scope" value="Eukaryota"/>
</dbReference>
<dbReference type="HOGENOM" id="CLU_170457_0_0_1"/>
<dbReference type="InParanoid" id="P81278"/>
<dbReference type="OrthoDB" id="8587277at2759"/>
<dbReference type="PhylomeDB" id="P81278"/>
<dbReference type="Reactome" id="R-RNO-375276">
    <property type="pathway name" value="Peptide ligand-binding receptors"/>
</dbReference>
<dbReference type="PRO" id="PR:P81278"/>
<dbReference type="Proteomes" id="UP000002494">
    <property type="component" value="Chromosome 9"/>
</dbReference>
<dbReference type="Bgee" id="ENSRNOG00000019871">
    <property type="expression patterns" value="Expressed in testis and 9 other cell types or tissues"/>
</dbReference>
<dbReference type="GO" id="GO:0005737">
    <property type="term" value="C:cytoplasm"/>
    <property type="evidence" value="ECO:0000314"/>
    <property type="project" value="MGI"/>
</dbReference>
<dbReference type="GO" id="GO:0005576">
    <property type="term" value="C:extracellular region"/>
    <property type="evidence" value="ECO:0007669"/>
    <property type="project" value="UniProtKB-SubCell"/>
</dbReference>
<dbReference type="GO" id="GO:0005179">
    <property type="term" value="F:hormone activity"/>
    <property type="evidence" value="ECO:0000304"/>
    <property type="project" value="RGD"/>
</dbReference>
<dbReference type="GO" id="GO:0005184">
    <property type="term" value="F:neuropeptide hormone activity"/>
    <property type="evidence" value="ECO:0000315"/>
    <property type="project" value="RGD"/>
</dbReference>
<dbReference type="GO" id="GO:0005148">
    <property type="term" value="F:prolactin receptor binding"/>
    <property type="evidence" value="ECO:0000304"/>
    <property type="project" value="RGD"/>
</dbReference>
<dbReference type="GO" id="GO:0031861">
    <property type="term" value="F:prolactin-releasing peptide receptor binding"/>
    <property type="evidence" value="ECO:0000315"/>
    <property type="project" value="RGD"/>
</dbReference>
<dbReference type="GO" id="GO:0048483">
    <property type="term" value="P:autonomic nervous system development"/>
    <property type="evidence" value="ECO:0000266"/>
    <property type="project" value="RGD"/>
</dbReference>
<dbReference type="GO" id="GO:0042755">
    <property type="term" value="P:eating behavior"/>
    <property type="evidence" value="ECO:0000266"/>
    <property type="project" value="RGD"/>
</dbReference>
<dbReference type="GO" id="GO:0006112">
    <property type="term" value="P:energy reserve metabolic process"/>
    <property type="evidence" value="ECO:0000266"/>
    <property type="project" value="RGD"/>
</dbReference>
<dbReference type="GO" id="GO:0045444">
    <property type="term" value="P:fat cell differentiation"/>
    <property type="evidence" value="ECO:0000266"/>
    <property type="project" value="RGD"/>
</dbReference>
<dbReference type="GO" id="GO:0007631">
    <property type="term" value="P:feeding behavior"/>
    <property type="evidence" value="ECO:0000315"/>
    <property type="project" value="RGD"/>
</dbReference>
<dbReference type="GO" id="GO:0007186">
    <property type="term" value="P:G protein-coupled receptor signaling pathway"/>
    <property type="evidence" value="ECO:0000315"/>
    <property type="project" value="RGD"/>
</dbReference>
<dbReference type="GO" id="GO:0006629">
    <property type="term" value="P:lipid metabolic process"/>
    <property type="evidence" value="ECO:0000266"/>
    <property type="project" value="RGD"/>
</dbReference>
<dbReference type="GO" id="GO:0002023">
    <property type="term" value="P:reduction of food intake in response to dietary excess"/>
    <property type="evidence" value="ECO:0000315"/>
    <property type="project" value="MGI"/>
</dbReference>
<dbReference type="GO" id="GO:0040014">
    <property type="term" value="P:regulation of multicellular organism growth"/>
    <property type="evidence" value="ECO:0000266"/>
    <property type="project" value="RGD"/>
</dbReference>
<dbReference type="GO" id="GO:0002021">
    <property type="term" value="P:response to dietary excess"/>
    <property type="evidence" value="ECO:0000266"/>
    <property type="project" value="RGD"/>
</dbReference>
<dbReference type="GO" id="GO:0009749">
    <property type="term" value="P:response to glucose"/>
    <property type="evidence" value="ECO:0000266"/>
    <property type="project" value="RGD"/>
</dbReference>
<dbReference type="GO" id="GO:0032868">
    <property type="term" value="P:response to insulin"/>
    <property type="evidence" value="ECO:0000266"/>
    <property type="project" value="RGD"/>
</dbReference>
<dbReference type="GO" id="GO:0043434">
    <property type="term" value="P:response to peptide hormone"/>
    <property type="evidence" value="ECO:0000266"/>
    <property type="project" value="RGD"/>
</dbReference>
<dbReference type="GO" id="GO:0001894">
    <property type="term" value="P:tissue homeostasis"/>
    <property type="evidence" value="ECO:0000266"/>
    <property type="project" value="RGD"/>
</dbReference>
<dbReference type="InterPro" id="IPR026194">
    <property type="entry name" value="PrRP"/>
</dbReference>
<dbReference type="PANTHER" id="PTHR17206">
    <property type="entry name" value="PROLACTIN-RELEASING PEPTIDE"/>
    <property type="match status" value="1"/>
</dbReference>
<dbReference type="PANTHER" id="PTHR17206:SF1">
    <property type="entry name" value="PROLACTIN-RELEASING PEPTIDE"/>
    <property type="match status" value="1"/>
</dbReference>
<dbReference type="Pfam" id="PF15172">
    <property type="entry name" value="Prolactin_RP"/>
    <property type="match status" value="1"/>
</dbReference>
<accession>P81278</accession>
<accession>Q8K3Y0</accession>
<keyword id="KW-0025">Alternative splicing</keyword>
<keyword id="KW-0027">Amidation</keyword>
<keyword id="KW-0165">Cleavage on pair of basic residues</keyword>
<keyword id="KW-0372">Hormone</keyword>
<keyword id="KW-1185">Reference proteome</keyword>
<keyword id="KW-0964">Secreted</keyword>
<keyword id="KW-0732">Signal</keyword>
<feature type="signal peptide" evidence="1">
    <location>
        <begin position="1"/>
        <end position="21"/>
    </location>
</feature>
<feature type="peptide" id="PRO_0000022147" description="Prolactin-releasing peptide PrRP31">
    <location>
        <begin position="22"/>
        <end position="52"/>
    </location>
</feature>
<feature type="peptide" id="PRO_0000022148" description="Prolactin-releasing peptide PrRP20">
    <location>
        <begin position="33"/>
        <end position="52"/>
    </location>
</feature>
<feature type="propeptide" id="PRO_0000022149">
    <location>
        <begin position="57"/>
        <end position="83"/>
    </location>
</feature>
<feature type="modified residue" description="Phenylalanine amide" evidence="1">
    <location>
        <position position="52"/>
    </location>
</feature>
<feature type="splice variant" id="VSP_004370" description="In isoform 2." evidence="3">
    <original>TPDINPAWYTGRGIRPVGRFGRRRATPRDVTGLGQLSCLPLDGRTKFSQRG</original>
    <variation>SECLTYGKQPLTSFHPFTSQMPP</variation>
    <location>
        <begin position="33"/>
        <end position="83"/>
    </location>
</feature>
<reference key="1">
    <citation type="journal article" date="1998" name="Nature">
        <title>A prolactin-releasing peptide in the brain.</title>
        <authorList>
            <person name="Hinuma S."/>
            <person name="Habata Y."/>
            <person name="Fujii R."/>
            <person name="Kawamata Y."/>
            <person name="Hosoya M."/>
            <person name="Fukusumi S."/>
            <person name="Kitada C."/>
            <person name="Masuo Y."/>
            <person name="Asano T."/>
            <person name="Matsumoto H."/>
            <person name="Sekiguchi M."/>
            <person name="Kurokawa T."/>
            <person name="Nishimura O."/>
            <person name="Onda H."/>
            <person name="Fujino M."/>
        </authorList>
    </citation>
    <scope>NUCLEOTIDE SEQUENCE [MRNA] (ISOFORM 1)</scope>
    <source>
        <tissue>Brain</tissue>
    </source>
</reference>
<reference key="2">
    <citation type="journal article" date="2001" name="Biochem. Biophys. Res. Commun.">
        <title>Isolation and characterization of the rat prolactin-releasing peptide gene: multiple TATA boxes in the promoter region.</title>
        <authorList>
            <person name="Yamada M."/>
            <person name="Ozawa A."/>
            <person name="Ishii S."/>
            <person name="Shibusawa N."/>
            <person name="Hashida T."/>
            <person name="Ishizuka T."/>
            <person name="Hosoya T."/>
            <person name="Monden T."/>
            <person name="Satoh T."/>
            <person name="Mori M."/>
        </authorList>
    </citation>
    <scope>NUCLEOTIDE SEQUENCE [GENOMIC DNA] (ISOFORM 1)</scope>
    <source>
        <strain>Sprague-Dawley</strain>
    </source>
</reference>
<reference key="3">
    <citation type="submission" date="2002-06" db="EMBL/GenBank/DDBJ databases">
        <title>Quantitation of prolactin-releasing peptide (PrRP) mRNA expression in specific brain regions during the rat oestrous cycle and in lactation.</title>
        <authorList>
            <person name="Anderson S.T."/>
            <person name="Kokay I.C."/>
            <person name="Lang T."/>
            <person name="Grattan D.R."/>
            <person name="Curlewis J.D."/>
        </authorList>
    </citation>
    <scope>NUCLEOTIDE SEQUENCE (ISOFORM 2)</scope>
    <source>
        <strain>Sprague-Dawley</strain>
        <tissue>Hypothalamus</tissue>
    </source>
</reference>
<reference key="4">
    <citation type="journal article" date="1999" name="Regul. Pept.">
        <title>Tissue distribution of prolactin-releasing peptide (PrRP) and its receptor.</title>
        <authorList>
            <person name="Fujii R."/>
            <person name="Fukusumi S."/>
            <person name="Hosoya M."/>
            <person name="Kawamata Y."/>
            <person name="Habata Y."/>
            <person name="Hinuma S."/>
            <person name="Sekiguchi M."/>
            <person name="Kitada C."/>
            <person name="Kurokawa T."/>
            <person name="Nishimura O."/>
            <person name="Onda H."/>
            <person name="Sumino Y."/>
            <person name="Fujino M."/>
        </authorList>
    </citation>
    <scope>TISSUE SPECIFICITY</scope>
</reference>
<protein>
    <recommendedName>
        <fullName>Prolactin-releasing peptide</fullName>
        <shortName>PrRP</shortName>
    </recommendedName>
    <alternativeName>
        <fullName>Prolactin-releasing hormone</fullName>
    </alternativeName>
    <component>
        <recommendedName>
            <fullName>Prolactin-releasing peptide PrRP31</fullName>
        </recommendedName>
    </component>
    <component>
        <recommendedName>
            <fullName>Prolactin-releasing peptide PrRP20</fullName>
        </recommendedName>
    </component>
</protein>
<proteinExistence type="evidence at transcript level"/>
<gene>
    <name type="primary">Prlh</name>
    <name type="synonym">Prh</name>
</gene>
<name>PRRP_RAT</name>
<organism>
    <name type="scientific">Rattus norvegicus</name>
    <name type="common">Rat</name>
    <dbReference type="NCBI Taxonomy" id="10116"/>
    <lineage>
        <taxon>Eukaryota</taxon>
        <taxon>Metazoa</taxon>
        <taxon>Chordata</taxon>
        <taxon>Craniata</taxon>
        <taxon>Vertebrata</taxon>
        <taxon>Euteleostomi</taxon>
        <taxon>Mammalia</taxon>
        <taxon>Eutheria</taxon>
        <taxon>Euarchontoglires</taxon>
        <taxon>Glires</taxon>
        <taxon>Rodentia</taxon>
        <taxon>Myomorpha</taxon>
        <taxon>Muroidea</taxon>
        <taxon>Muridae</taxon>
        <taxon>Murinae</taxon>
        <taxon>Rattus</taxon>
    </lineage>
</organism>